<comment type="similarity">
    <text evidence="1">Belongs to the UPF0340 family.</text>
</comment>
<evidence type="ECO:0000255" key="1">
    <source>
        <dbReference type="HAMAP-Rule" id="MF_00800"/>
    </source>
</evidence>
<proteinExistence type="inferred from homology"/>
<keyword id="KW-1185">Reference proteome</keyword>
<gene>
    <name type="ordered locus">BA_5559</name>
    <name type="ordered locus">GBAA_5559</name>
    <name type="ordered locus">BAS5166</name>
</gene>
<dbReference type="EMBL" id="AE016879">
    <property type="protein sequence ID" value="AAP29203.1"/>
    <property type="molecule type" value="Genomic_DNA"/>
</dbReference>
<dbReference type="EMBL" id="AE017334">
    <property type="protein sequence ID" value="AAT34703.1"/>
    <property type="molecule type" value="Genomic_DNA"/>
</dbReference>
<dbReference type="EMBL" id="AE017225">
    <property type="protein sequence ID" value="AAT57455.1"/>
    <property type="molecule type" value="Genomic_DNA"/>
</dbReference>
<dbReference type="RefSeq" id="NP_847717.1">
    <property type="nucleotide sequence ID" value="NC_003997.3"/>
</dbReference>
<dbReference type="RefSeq" id="WP_000136366.1">
    <property type="nucleotide sequence ID" value="NZ_WXXJ01000038.1"/>
</dbReference>
<dbReference type="RefSeq" id="YP_031405.1">
    <property type="nucleotide sequence ID" value="NC_005945.1"/>
</dbReference>
<dbReference type="SMR" id="Q81JY3"/>
<dbReference type="IntAct" id="Q81JY3">
    <property type="interactions" value="1"/>
</dbReference>
<dbReference type="STRING" id="261594.GBAA_5559"/>
<dbReference type="DNASU" id="1085247"/>
<dbReference type="GeneID" id="45025147"/>
<dbReference type="KEGG" id="ban:BA_5559"/>
<dbReference type="KEGG" id="bar:GBAA_5559"/>
<dbReference type="KEGG" id="bat:BAS5166"/>
<dbReference type="PATRIC" id="fig|198094.11.peg.5519"/>
<dbReference type="eggNOG" id="COG4475">
    <property type="taxonomic scope" value="Bacteria"/>
</dbReference>
<dbReference type="HOGENOM" id="CLU_106658_0_0_9"/>
<dbReference type="OMA" id="FIGMHLR"/>
<dbReference type="Proteomes" id="UP000000427">
    <property type="component" value="Chromosome"/>
</dbReference>
<dbReference type="Proteomes" id="UP000000594">
    <property type="component" value="Chromosome"/>
</dbReference>
<dbReference type="Gene3D" id="3.40.50.10360">
    <property type="entry name" value="Hypothetical protein TT1679"/>
    <property type="match status" value="1"/>
</dbReference>
<dbReference type="HAMAP" id="MF_00800">
    <property type="entry name" value="UPF0340"/>
    <property type="match status" value="1"/>
</dbReference>
<dbReference type="InterPro" id="IPR028345">
    <property type="entry name" value="Antibiotic_NAT-like"/>
</dbReference>
<dbReference type="InterPro" id="IPR006340">
    <property type="entry name" value="DUF436"/>
</dbReference>
<dbReference type="NCBIfam" id="TIGR01440">
    <property type="entry name" value="TIGR01440 family protein"/>
    <property type="match status" value="1"/>
</dbReference>
<dbReference type="Pfam" id="PF04260">
    <property type="entry name" value="DUF436"/>
    <property type="match status" value="1"/>
</dbReference>
<dbReference type="PIRSF" id="PIRSF007510">
    <property type="entry name" value="UCP007510"/>
    <property type="match status" value="1"/>
</dbReference>
<dbReference type="SUPFAM" id="SSF110710">
    <property type="entry name" value="TTHA0583/YokD-like"/>
    <property type="match status" value="1"/>
</dbReference>
<name>Y5559_BACAN</name>
<feature type="chain" id="PRO_0000212999" description="UPF0340 protein BA_5559/GBAA_5559/BAS5166">
    <location>
        <begin position="1"/>
        <end position="190"/>
    </location>
</feature>
<sequence length="190" mass="20741">MTEIVKVREQLQISLSDFQEQASLQSGQIFVVGCSTSEVLGERIGTSGTMEVAEAIFSELKQFQEQTGIELAFQCCEHLNRALVVERELAMKYQFEIVTVTPVRSAGGALATYAYHNLKDPVVIEFIKADAGMDIGDTFIGMHLKHVAVPVRTSVKEIGSAHVTMATTRGKLIGGARAVYAAKEETITCR</sequence>
<protein>
    <recommendedName>
        <fullName evidence="1">UPF0340 protein BA_5559/GBAA_5559/BAS5166</fullName>
    </recommendedName>
</protein>
<organism>
    <name type="scientific">Bacillus anthracis</name>
    <dbReference type="NCBI Taxonomy" id="1392"/>
    <lineage>
        <taxon>Bacteria</taxon>
        <taxon>Bacillati</taxon>
        <taxon>Bacillota</taxon>
        <taxon>Bacilli</taxon>
        <taxon>Bacillales</taxon>
        <taxon>Bacillaceae</taxon>
        <taxon>Bacillus</taxon>
        <taxon>Bacillus cereus group</taxon>
    </lineage>
</organism>
<reference key="1">
    <citation type="journal article" date="2003" name="Nature">
        <title>The genome sequence of Bacillus anthracis Ames and comparison to closely related bacteria.</title>
        <authorList>
            <person name="Read T.D."/>
            <person name="Peterson S.N."/>
            <person name="Tourasse N.J."/>
            <person name="Baillie L.W."/>
            <person name="Paulsen I.T."/>
            <person name="Nelson K.E."/>
            <person name="Tettelin H."/>
            <person name="Fouts D.E."/>
            <person name="Eisen J.A."/>
            <person name="Gill S.R."/>
            <person name="Holtzapple E.K."/>
            <person name="Okstad O.A."/>
            <person name="Helgason E."/>
            <person name="Rilstone J."/>
            <person name="Wu M."/>
            <person name="Kolonay J.F."/>
            <person name="Beanan M.J."/>
            <person name="Dodson R.J."/>
            <person name="Brinkac L.M."/>
            <person name="Gwinn M.L."/>
            <person name="DeBoy R.T."/>
            <person name="Madpu R."/>
            <person name="Daugherty S.C."/>
            <person name="Durkin A.S."/>
            <person name="Haft D.H."/>
            <person name="Nelson W.C."/>
            <person name="Peterson J.D."/>
            <person name="Pop M."/>
            <person name="Khouri H.M."/>
            <person name="Radune D."/>
            <person name="Benton J.L."/>
            <person name="Mahamoud Y."/>
            <person name="Jiang L."/>
            <person name="Hance I.R."/>
            <person name="Weidman J.F."/>
            <person name="Berry K.J."/>
            <person name="Plaut R.D."/>
            <person name="Wolf A.M."/>
            <person name="Watkins K.L."/>
            <person name="Nierman W.C."/>
            <person name="Hazen A."/>
            <person name="Cline R.T."/>
            <person name="Redmond C."/>
            <person name="Thwaite J.E."/>
            <person name="White O."/>
            <person name="Salzberg S.L."/>
            <person name="Thomason B."/>
            <person name="Friedlander A.M."/>
            <person name="Koehler T.M."/>
            <person name="Hanna P.C."/>
            <person name="Kolstoe A.-B."/>
            <person name="Fraser C.M."/>
        </authorList>
    </citation>
    <scope>NUCLEOTIDE SEQUENCE [LARGE SCALE GENOMIC DNA]</scope>
    <source>
        <strain>Ames / isolate Porton</strain>
    </source>
</reference>
<reference key="2">
    <citation type="journal article" date="2009" name="J. Bacteriol.">
        <title>The complete genome sequence of Bacillus anthracis Ames 'Ancestor'.</title>
        <authorList>
            <person name="Ravel J."/>
            <person name="Jiang L."/>
            <person name="Stanley S.T."/>
            <person name="Wilson M.R."/>
            <person name="Decker R.S."/>
            <person name="Read T.D."/>
            <person name="Worsham P."/>
            <person name="Keim P.S."/>
            <person name="Salzberg S.L."/>
            <person name="Fraser-Liggett C.M."/>
            <person name="Rasko D.A."/>
        </authorList>
    </citation>
    <scope>NUCLEOTIDE SEQUENCE [LARGE SCALE GENOMIC DNA]</scope>
    <source>
        <strain>Ames ancestor</strain>
    </source>
</reference>
<reference key="3">
    <citation type="submission" date="2004-01" db="EMBL/GenBank/DDBJ databases">
        <title>Complete genome sequence of Bacillus anthracis Sterne.</title>
        <authorList>
            <person name="Brettin T.S."/>
            <person name="Bruce D."/>
            <person name="Challacombe J.F."/>
            <person name="Gilna P."/>
            <person name="Han C."/>
            <person name="Hill K."/>
            <person name="Hitchcock P."/>
            <person name="Jackson P."/>
            <person name="Keim P."/>
            <person name="Longmire J."/>
            <person name="Lucas S."/>
            <person name="Okinaka R."/>
            <person name="Richardson P."/>
            <person name="Rubin E."/>
            <person name="Tice H."/>
        </authorList>
    </citation>
    <scope>NUCLEOTIDE SEQUENCE [LARGE SCALE GENOMIC DNA]</scope>
    <source>
        <strain>Sterne</strain>
    </source>
</reference>
<accession>Q81JY3</accession>
<accession>Q6HQI3</accession>
<accession>Q6KJV7</accession>